<organism>
    <name type="scientific">Yersinia pseudotuberculosis serotype I (strain IP32953)</name>
    <dbReference type="NCBI Taxonomy" id="273123"/>
    <lineage>
        <taxon>Bacteria</taxon>
        <taxon>Pseudomonadati</taxon>
        <taxon>Pseudomonadota</taxon>
        <taxon>Gammaproteobacteria</taxon>
        <taxon>Enterobacterales</taxon>
        <taxon>Yersiniaceae</taxon>
        <taxon>Yersinia</taxon>
    </lineage>
</organism>
<evidence type="ECO:0000255" key="1">
    <source>
        <dbReference type="HAMAP-Rule" id="MF_00016"/>
    </source>
</evidence>
<keyword id="KW-0067">ATP-binding</keyword>
<keyword id="KW-0963">Cytoplasm</keyword>
<keyword id="KW-0227">DNA damage</keyword>
<keyword id="KW-0233">DNA recombination</keyword>
<keyword id="KW-0234">DNA repair</keyword>
<keyword id="KW-0238">DNA-binding</keyword>
<keyword id="KW-0378">Hydrolase</keyword>
<keyword id="KW-0547">Nucleotide-binding</keyword>
<accession>Q66AT9</accession>
<reference key="1">
    <citation type="journal article" date="2004" name="Proc. Natl. Acad. Sci. U.S.A.">
        <title>Insights into the evolution of Yersinia pestis through whole-genome comparison with Yersinia pseudotuberculosis.</title>
        <authorList>
            <person name="Chain P.S.G."/>
            <person name="Carniel E."/>
            <person name="Larimer F.W."/>
            <person name="Lamerdin J."/>
            <person name="Stoutland P.O."/>
            <person name="Regala W.M."/>
            <person name="Georgescu A.M."/>
            <person name="Vergez L.M."/>
            <person name="Land M.L."/>
            <person name="Motin V.L."/>
            <person name="Brubaker R.R."/>
            <person name="Fowler J."/>
            <person name="Hinnebusch J."/>
            <person name="Marceau M."/>
            <person name="Medigue C."/>
            <person name="Simonet M."/>
            <person name="Chenal-Francisque V."/>
            <person name="Souza B."/>
            <person name="Dacheux D."/>
            <person name="Elliott J.M."/>
            <person name="Derbise A."/>
            <person name="Hauser L.J."/>
            <person name="Garcia E."/>
        </authorList>
    </citation>
    <scope>NUCLEOTIDE SEQUENCE [LARGE SCALE GENOMIC DNA]</scope>
    <source>
        <strain>IP32953</strain>
    </source>
</reference>
<proteinExistence type="inferred from homology"/>
<gene>
    <name evidence="1" type="primary">ruvB</name>
    <name type="ordered locus">YPTB2041</name>
</gene>
<dbReference type="EC" id="3.6.4.-" evidence="1"/>
<dbReference type="EMBL" id="BX936398">
    <property type="protein sequence ID" value="CAH21279.1"/>
    <property type="molecule type" value="Genomic_DNA"/>
</dbReference>
<dbReference type="RefSeq" id="WP_002211198.1">
    <property type="nucleotide sequence ID" value="NZ_CP009712.1"/>
</dbReference>
<dbReference type="SMR" id="Q66AT9"/>
<dbReference type="GeneID" id="57976603"/>
<dbReference type="KEGG" id="ypo:BZ17_424"/>
<dbReference type="KEGG" id="yps:YPTB2041"/>
<dbReference type="PATRIC" id="fig|273123.14.peg.453"/>
<dbReference type="Proteomes" id="UP000001011">
    <property type="component" value="Chromosome"/>
</dbReference>
<dbReference type="GO" id="GO:0005737">
    <property type="term" value="C:cytoplasm"/>
    <property type="evidence" value="ECO:0007669"/>
    <property type="project" value="UniProtKB-SubCell"/>
</dbReference>
<dbReference type="GO" id="GO:0048476">
    <property type="term" value="C:Holliday junction resolvase complex"/>
    <property type="evidence" value="ECO:0007669"/>
    <property type="project" value="UniProtKB-UniRule"/>
</dbReference>
<dbReference type="GO" id="GO:0005524">
    <property type="term" value="F:ATP binding"/>
    <property type="evidence" value="ECO:0007669"/>
    <property type="project" value="UniProtKB-UniRule"/>
</dbReference>
<dbReference type="GO" id="GO:0016887">
    <property type="term" value="F:ATP hydrolysis activity"/>
    <property type="evidence" value="ECO:0007669"/>
    <property type="project" value="InterPro"/>
</dbReference>
<dbReference type="GO" id="GO:0000400">
    <property type="term" value="F:four-way junction DNA binding"/>
    <property type="evidence" value="ECO:0007669"/>
    <property type="project" value="UniProtKB-UniRule"/>
</dbReference>
<dbReference type="GO" id="GO:0009378">
    <property type="term" value="F:four-way junction helicase activity"/>
    <property type="evidence" value="ECO:0007669"/>
    <property type="project" value="InterPro"/>
</dbReference>
<dbReference type="GO" id="GO:0006310">
    <property type="term" value="P:DNA recombination"/>
    <property type="evidence" value="ECO:0007669"/>
    <property type="project" value="UniProtKB-UniRule"/>
</dbReference>
<dbReference type="GO" id="GO:0006281">
    <property type="term" value="P:DNA repair"/>
    <property type="evidence" value="ECO:0007669"/>
    <property type="project" value="UniProtKB-UniRule"/>
</dbReference>
<dbReference type="CDD" id="cd00009">
    <property type="entry name" value="AAA"/>
    <property type="match status" value="1"/>
</dbReference>
<dbReference type="FunFam" id="1.10.10.10:FF:000086">
    <property type="entry name" value="Holliday junction ATP-dependent DNA helicase RuvB"/>
    <property type="match status" value="1"/>
</dbReference>
<dbReference type="FunFam" id="1.10.8.60:FF:000023">
    <property type="entry name" value="Holliday junction ATP-dependent DNA helicase RuvB"/>
    <property type="match status" value="1"/>
</dbReference>
<dbReference type="FunFam" id="3.40.50.300:FF:000073">
    <property type="entry name" value="Holliday junction ATP-dependent DNA helicase RuvB"/>
    <property type="match status" value="1"/>
</dbReference>
<dbReference type="Gene3D" id="1.10.8.60">
    <property type="match status" value="1"/>
</dbReference>
<dbReference type="Gene3D" id="3.40.50.300">
    <property type="entry name" value="P-loop containing nucleotide triphosphate hydrolases"/>
    <property type="match status" value="1"/>
</dbReference>
<dbReference type="Gene3D" id="1.10.10.10">
    <property type="entry name" value="Winged helix-like DNA-binding domain superfamily/Winged helix DNA-binding domain"/>
    <property type="match status" value="1"/>
</dbReference>
<dbReference type="HAMAP" id="MF_00016">
    <property type="entry name" value="DNA_HJ_migration_RuvB"/>
    <property type="match status" value="1"/>
</dbReference>
<dbReference type="InterPro" id="IPR003593">
    <property type="entry name" value="AAA+_ATPase"/>
</dbReference>
<dbReference type="InterPro" id="IPR041445">
    <property type="entry name" value="AAA_lid_4"/>
</dbReference>
<dbReference type="InterPro" id="IPR004605">
    <property type="entry name" value="DNA_helicase_Holl-junc_RuvB"/>
</dbReference>
<dbReference type="InterPro" id="IPR027417">
    <property type="entry name" value="P-loop_NTPase"/>
</dbReference>
<dbReference type="InterPro" id="IPR008824">
    <property type="entry name" value="RuvB-like_N"/>
</dbReference>
<dbReference type="InterPro" id="IPR008823">
    <property type="entry name" value="RuvB_C"/>
</dbReference>
<dbReference type="InterPro" id="IPR036388">
    <property type="entry name" value="WH-like_DNA-bd_sf"/>
</dbReference>
<dbReference type="InterPro" id="IPR036390">
    <property type="entry name" value="WH_DNA-bd_sf"/>
</dbReference>
<dbReference type="NCBIfam" id="NF000868">
    <property type="entry name" value="PRK00080.1"/>
    <property type="match status" value="1"/>
</dbReference>
<dbReference type="NCBIfam" id="TIGR00635">
    <property type="entry name" value="ruvB"/>
    <property type="match status" value="1"/>
</dbReference>
<dbReference type="PANTHER" id="PTHR42848">
    <property type="match status" value="1"/>
</dbReference>
<dbReference type="PANTHER" id="PTHR42848:SF1">
    <property type="entry name" value="HOLLIDAY JUNCTION BRANCH MIGRATION COMPLEX SUBUNIT RUVB"/>
    <property type="match status" value="1"/>
</dbReference>
<dbReference type="Pfam" id="PF17864">
    <property type="entry name" value="AAA_lid_4"/>
    <property type="match status" value="1"/>
</dbReference>
<dbReference type="Pfam" id="PF05491">
    <property type="entry name" value="RuvB_C"/>
    <property type="match status" value="1"/>
</dbReference>
<dbReference type="Pfam" id="PF05496">
    <property type="entry name" value="RuvB_N"/>
    <property type="match status" value="1"/>
</dbReference>
<dbReference type="SMART" id="SM00382">
    <property type="entry name" value="AAA"/>
    <property type="match status" value="1"/>
</dbReference>
<dbReference type="SUPFAM" id="SSF52540">
    <property type="entry name" value="P-loop containing nucleoside triphosphate hydrolases"/>
    <property type="match status" value="1"/>
</dbReference>
<dbReference type="SUPFAM" id="SSF46785">
    <property type="entry name" value="Winged helix' DNA-binding domain"/>
    <property type="match status" value="1"/>
</dbReference>
<protein>
    <recommendedName>
        <fullName evidence="1">Holliday junction branch migration complex subunit RuvB</fullName>
        <ecNumber evidence="1">3.6.4.-</ecNumber>
    </recommendedName>
</protein>
<name>RUVB_YERPS</name>
<comment type="function">
    <text evidence="1">The RuvA-RuvB-RuvC complex processes Holliday junction (HJ) DNA during genetic recombination and DNA repair, while the RuvA-RuvB complex plays an important role in the rescue of blocked DNA replication forks via replication fork reversal (RFR). RuvA specifically binds to HJ cruciform DNA, conferring on it an open structure. The RuvB hexamer acts as an ATP-dependent pump, pulling dsDNA into and through the RuvAB complex. RuvB forms 2 homohexamers on either side of HJ DNA bound by 1 or 2 RuvA tetramers; 4 subunits per hexamer contact DNA at a time. Coordinated motions by a converter formed by DNA-disengaged RuvB subunits stimulates ATP hydrolysis and nucleotide exchange. Immobilization of the converter enables RuvB to convert the ATP-contained energy into a lever motion, pulling 2 nucleotides of DNA out of the RuvA tetramer per ATP hydrolyzed, thus driving DNA branch migration. The RuvB motors rotate together with the DNA substrate, which together with the progressing nucleotide cycle form the mechanistic basis for DNA recombination by continuous HJ branch migration. Branch migration allows RuvC to scan DNA until it finds its consensus sequence, where it cleaves and resolves cruciform DNA.</text>
</comment>
<comment type="catalytic activity">
    <reaction evidence="1">
        <text>ATP + H2O = ADP + phosphate + H(+)</text>
        <dbReference type="Rhea" id="RHEA:13065"/>
        <dbReference type="ChEBI" id="CHEBI:15377"/>
        <dbReference type="ChEBI" id="CHEBI:15378"/>
        <dbReference type="ChEBI" id="CHEBI:30616"/>
        <dbReference type="ChEBI" id="CHEBI:43474"/>
        <dbReference type="ChEBI" id="CHEBI:456216"/>
    </reaction>
</comment>
<comment type="subunit">
    <text evidence="1">Homohexamer. Forms an RuvA(8)-RuvB(12)-Holliday junction (HJ) complex. HJ DNA is sandwiched between 2 RuvA tetramers; dsDNA enters through RuvA and exits via RuvB. An RuvB hexamer assembles on each DNA strand where it exits the tetramer. Each RuvB hexamer is contacted by two RuvA subunits (via domain III) on 2 adjacent RuvB subunits; this complex drives branch migration. In the full resolvosome a probable DNA-RuvA(4)-RuvB(12)-RuvC(2) complex forms which resolves the HJ.</text>
</comment>
<comment type="subcellular location">
    <subcellularLocation>
        <location evidence="1">Cytoplasm</location>
    </subcellularLocation>
</comment>
<comment type="domain">
    <text evidence="1">Has 3 domains, the large (RuvB-L) and small ATPase (RuvB-S) domains and the C-terminal head (RuvB-H) domain. The head domain binds DNA, while the ATPase domains jointly bind ATP, ADP or are empty depending on the state of the subunit in the translocation cycle. During a single DNA translocation step the structure of each domain remains the same, but their relative positions change.</text>
</comment>
<comment type="similarity">
    <text evidence="1">Belongs to the RuvB family.</text>
</comment>
<sequence length="334" mass="37050">MIEADRLISAAVINDEESIDRAIRPKLLTEYVGQPHVREQMEIFIQAAKQRGDALDHVLIFGPPGLGKTTLANIIANEMGVNLRTTSGPVLEKAGDLAAMLTNLEPHDVLFIDEIHRLSPVVEEILYPAMEDYQLDIMIGEGPAARSIKLDLPPFTLIGATTRAGSLTSPLRDRFGIVQRLEFYQVADLEHIVSRSAKCLGLELTPEGAHQLARRSRGTPRITNRLLRRVRDFAEVRADGAINGEVAMKALDMLNVDAEGFDFMDRKLLLAVIDKFMGGPVGLDNLAAAIGEERETIEDVLEPYLIQQGFIQRTPRGRIATNHAYKHFGITREE</sequence>
<feature type="chain" id="PRO_0000165638" description="Holliday junction branch migration complex subunit RuvB">
    <location>
        <begin position="1"/>
        <end position="334"/>
    </location>
</feature>
<feature type="region of interest" description="Large ATPase domain (RuvB-L)" evidence="1">
    <location>
        <begin position="4"/>
        <end position="184"/>
    </location>
</feature>
<feature type="region of interest" description="Small ATPAse domain (RuvB-S)" evidence="1">
    <location>
        <begin position="185"/>
        <end position="255"/>
    </location>
</feature>
<feature type="region of interest" description="Head domain (RuvB-H)" evidence="1">
    <location>
        <begin position="258"/>
        <end position="334"/>
    </location>
</feature>
<feature type="binding site" evidence="1">
    <location>
        <position position="23"/>
    </location>
    <ligand>
        <name>ATP</name>
        <dbReference type="ChEBI" id="CHEBI:30616"/>
    </ligand>
</feature>
<feature type="binding site" evidence="1">
    <location>
        <position position="24"/>
    </location>
    <ligand>
        <name>ATP</name>
        <dbReference type="ChEBI" id="CHEBI:30616"/>
    </ligand>
</feature>
<feature type="binding site" evidence="1">
    <location>
        <position position="65"/>
    </location>
    <ligand>
        <name>ATP</name>
        <dbReference type="ChEBI" id="CHEBI:30616"/>
    </ligand>
</feature>
<feature type="binding site" evidence="1">
    <location>
        <position position="68"/>
    </location>
    <ligand>
        <name>ATP</name>
        <dbReference type="ChEBI" id="CHEBI:30616"/>
    </ligand>
</feature>
<feature type="binding site" evidence="1">
    <location>
        <position position="69"/>
    </location>
    <ligand>
        <name>ATP</name>
        <dbReference type="ChEBI" id="CHEBI:30616"/>
    </ligand>
</feature>
<feature type="binding site" evidence="1">
    <location>
        <position position="69"/>
    </location>
    <ligand>
        <name>Mg(2+)</name>
        <dbReference type="ChEBI" id="CHEBI:18420"/>
    </ligand>
</feature>
<feature type="binding site" evidence="1">
    <location>
        <position position="70"/>
    </location>
    <ligand>
        <name>ATP</name>
        <dbReference type="ChEBI" id="CHEBI:30616"/>
    </ligand>
</feature>
<feature type="binding site" evidence="1">
    <location>
        <begin position="131"/>
        <end position="133"/>
    </location>
    <ligand>
        <name>ATP</name>
        <dbReference type="ChEBI" id="CHEBI:30616"/>
    </ligand>
</feature>
<feature type="binding site" evidence="1">
    <location>
        <position position="174"/>
    </location>
    <ligand>
        <name>ATP</name>
        <dbReference type="ChEBI" id="CHEBI:30616"/>
    </ligand>
</feature>
<feature type="binding site" evidence="1">
    <location>
        <position position="184"/>
    </location>
    <ligand>
        <name>ATP</name>
        <dbReference type="ChEBI" id="CHEBI:30616"/>
    </ligand>
</feature>
<feature type="binding site" evidence="1">
    <location>
        <position position="221"/>
    </location>
    <ligand>
        <name>ATP</name>
        <dbReference type="ChEBI" id="CHEBI:30616"/>
    </ligand>
</feature>
<feature type="binding site" evidence="1">
    <location>
        <position position="294"/>
    </location>
    <ligand>
        <name>DNA</name>
        <dbReference type="ChEBI" id="CHEBI:16991"/>
    </ligand>
</feature>
<feature type="binding site" evidence="1">
    <location>
        <position position="313"/>
    </location>
    <ligand>
        <name>DNA</name>
        <dbReference type="ChEBI" id="CHEBI:16991"/>
    </ligand>
</feature>
<feature type="binding site" evidence="1">
    <location>
        <position position="318"/>
    </location>
    <ligand>
        <name>DNA</name>
        <dbReference type="ChEBI" id="CHEBI:16991"/>
    </ligand>
</feature>